<protein>
    <recommendedName>
        <fullName evidence="1">Small ribosomal subunit protein uS15</fullName>
    </recommendedName>
    <alternativeName>
        <fullName evidence="2">30S ribosomal protein S15</fullName>
    </alternativeName>
</protein>
<organism>
    <name type="scientific">Synechococcus sp. (strain JA-2-3B'a(2-13))</name>
    <name type="common">Cyanobacteria bacterium Yellowstone B-Prime</name>
    <dbReference type="NCBI Taxonomy" id="321332"/>
    <lineage>
        <taxon>Bacteria</taxon>
        <taxon>Bacillati</taxon>
        <taxon>Cyanobacteriota</taxon>
        <taxon>Cyanophyceae</taxon>
        <taxon>Synechococcales</taxon>
        <taxon>Synechococcaceae</taxon>
        <taxon>Synechococcus</taxon>
    </lineage>
</organism>
<keyword id="KW-1185">Reference proteome</keyword>
<keyword id="KW-0687">Ribonucleoprotein</keyword>
<keyword id="KW-0689">Ribosomal protein</keyword>
<keyword id="KW-0694">RNA-binding</keyword>
<keyword id="KW-0699">rRNA-binding</keyword>
<accession>Q2JPU2</accession>
<reference key="1">
    <citation type="journal article" date="2007" name="ISME J.">
        <title>Population level functional diversity in a microbial community revealed by comparative genomic and metagenomic analyses.</title>
        <authorList>
            <person name="Bhaya D."/>
            <person name="Grossman A.R."/>
            <person name="Steunou A.-S."/>
            <person name="Khuri N."/>
            <person name="Cohan F.M."/>
            <person name="Hamamura N."/>
            <person name="Melendrez M.C."/>
            <person name="Bateson M.M."/>
            <person name="Ward D.M."/>
            <person name="Heidelberg J.F."/>
        </authorList>
    </citation>
    <scope>NUCLEOTIDE SEQUENCE [LARGE SCALE GENOMIC DNA]</scope>
    <source>
        <strain>JA-2-3B'a(2-13)</strain>
    </source>
</reference>
<proteinExistence type="inferred from homology"/>
<comment type="function">
    <text evidence="1">One of the primary rRNA binding proteins, it binds directly to 16S rRNA where it helps nucleate assembly of the platform of the 30S subunit by binding and bridging several RNA helices of the 16S rRNA.</text>
</comment>
<comment type="function">
    <text evidence="1">Forms an intersubunit bridge (bridge B4) with the 23S rRNA of the 50S subunit in the ribosome.</text>
</comment>
<comment type="subunit">
    <text evidence="1">Part of the 30S ribosomal subunit. Forms a bridge to the 50S subunit in the 70S ribosome, contacting the 23S rRNA.</text>
</comment>
<comment type="similarity">
    <text evidence="1">Belongs to the universal ribosomal protein uS15 family.</text>
</comment>
<dbReference type="EMBL" id="CP000240">
    <property type="protein sequence ID" value="ABD01184.1"/>
    <property type="molecule type" value="Genomic_DNA"/>
</dbReference>
<dbReference type="RefSeq" id="WP_011431855.1">
    <property type="nucleotide sequence ID" value="NC_007776.1"/>
</dbReference>
<dbReference type="SMR" id="Q2JPU2"/>
<dbReference type="STRING" id="321332.CYB_0184"/>
<dbReference type="KEGG" id="cyb:CYB_0184"/>
<dbReference type="eggNOG" id="COG0184">
    <property type="taxonomic scope" value="Bacteria"/>
</dbReference>
<dbReference type="HOGENOM" id="CLU_148518_0_0_3"/>
<dbReference type="OrthoDB" id="9799262at2"/>
<dbReference type="Proteomes" id="UP000001938">
    <property type="component" value="Chromosome"/>
</dbReference>
<dbReference type="GO" id="GO:0022627">
    <property type="term" value="C:cytosolic small ribosomal subunit"/>
    <property type="evidence" value="ECO:0007669"/>
    <property type="project" value="TreeGrafter"/>
</dbReference>
<dbReference type="GO" id="GO:0019843">
    <property type="term" value="F:rRNA binding"/>
    <property type="evidence" value="ECO:0007669"/>
    <property type="project" value="UniProtKB-UniRule"/>
</dbReference>
<dbReference type="GO" id="GO:0003735">
    <property type="term" value="F:structural constituent of ribosome"/>
    <property type="evidence" value="ECO:0007669"/>
    <property type="project" value="InterPro"/>
</dbReference>
<dbReference type="GO" id="GO:0006412">
    <property type="term" value="P:translation"/>
    <property type="evidence" value="ECO:0007669"/>
    <property type="project" value="UniProtKB-UniRule"/>
</dbReference>
<dbReference type="CDD" id="cd00353">
    <property type="entry name" value="Ribosomal_S15p_S13e"/>
    <property type="match status" value="1"/>
</dbReference>
<dbReference type="FunFam" id="1.10.287.10:FF:000002">
    <property type="entry name" value="30S ribosomal protein S15"/>
    <property type="match status" value="1"/>
</dbReference>
<dbReference type="Gene3D" id="6.10.250.3130">
    <property type="match status" value="1"/>
</dbReference>
<dbReference type="Gene3D" id="1.10.287.10">
    <property type="entry name" value="S15/NS1, RNA-binding"/>
    <property type="match status" value="1"/>
</dbReference>
<dbReference type="HAMAP" id="MF_01343_B">
    <property type="entry name" value="Ribosomal_uS15_B"/>
    <property type="match status" value="1"/>
</dbReference>
<dbReference type="InterPro" id="IPR000589">
    <property type="entry name" value="Ribosomal_uS15"/>
</dbReference>
<dbReference type="InterPro" id="IPR005290">
    <property type="entry name" value="Ribosomal_uS15_bac-type"/>
</dbReference>
<dbReference type="InterPro" id="IPR009068">
    <property type="entry name" value="uS15_NS1_RNA-bd_sf"/>
</dbReference>
<dbReference type="NCBIfam" id="TIGR00952">
    <property type="entry name" value="S15_bact"/>
    <property type="match status" value="1"/>
</dbReference>
<dbReference type="PANTHER" id="PTHR23321">
    <property type="entry name" value="RIBOSOMAL PROTEIN S15, BACTERIAL AND ORGANELLAR"/>
    <property type="match status" value="1"/>
</dbReference>
<dbReference type="PANTHER" id="PTHR23321:SF26">
    <property type="entry name" value="SMALL RIBOSOMAL SUBUNIT PROTEIN US15M"/>
    <property type="match status" value="1"/>
</dbReference>
<dbReference type="Pfam" id="PF00312">
    <property type="entry name" value="Ribosomal_S15"/>
    <property type="match status" value="1"/>
</dbReference>
<dbReference type="SMART" id="SM01387">
    <property type="entry name" value="Ribosomal_S15"/>
    <property type="match status" value="1"/>
</dbReference>
<dbReference type="SUPFAM" id="SSF47060">
    <property type="entry name" value="S15/NS1 RNA-binding domain"/>
    <property type="match status" value="1"/>
</dbReference>
<dbReference type="PROSITE" id="PS00362">
    <property type="entry name" value="RIBOSOMAL_S15"/>
    <property type="match status" value="1"/>
</dbReference>
<gene>
    <name evidence="1" type="primary">rpsO</name>
    <name evidence="1" type="synonym">rps15</name>
    <name type="ordered locus">CYB_0184</name>
</gene>
<evidence type="ECO:0000255" key="1">
    <source>
        <dbReference type="HAMAP-Rule" id="MF_01343"/>
    </source>
</evidence>
<evidence type="ECO:0000305" key="2"/>
<feature type="chain" id="PRO_0000255542" description="Small ribosomal subunit protein uS15">
    <location>
        <begin position="1"/>
        <end position="91"/>
    </location>
</feature>
<sequence length="91" mass="10783">MALLQQEKQQIIESYRLHDTDTGSAEVQVALLTSRINQLSQHLQRNPKDFNSRRGLLMMIGRRKRLLNYIAKHSPDRFRELAERLNIRVKK</sequence>
<name>RS15_SYNJB</name>